<comment type="function">
    <text evidence="1">Involved in transcription antitermination. Required for transcription of ribosomal RNA (rRNA) genes. Binds specifically to the boxA antiterminator sequence of the ribosomal RNA (rrn) operons.</text>
</comment>
<comment type="similarity">
    <text evidence="1">Belongs to the NusB family.</text>
</comment>
<name>NUSB_SHEPC</name>
<protein>
    <recommendedName>
        <fullName evidence="1">Transcription antitermination protein NusB</fullName>
    </recommendedName>
    <alternativeName>
        <fullName evidence="1">Antitermination factor NusB</fullName>
    </alternativeName>
</protein>
<feature type="chain" id="PRO_1000023773" description="Transcription antitermination protein NusB">
    <location>
        <begin position="1"/>
        <end position="134"/>
    </location>
</feature>
<gene>
    <name evidence="1" type="primary">nusB</name>
    <name type="ordered locus">Sputcn32_2774</name>
</gene>
<dbReference type="EMBL" id="CP000681">
    <property type="protein sequence ID" value="ABP76493.1"/>
    <property type="molecule type" value="Genomic_DNA"/>
</dbReference>
<dbReference type="SMR" id="A4Y960"/>
<dbReference type="STRING" id="319224.Sputcn32_2774"/>
<dbReference type="KEGG" id="spc:Sputcn32_2774"/>
<dbReference type="eggNOG" id="COG0781">
    <property type="taxonomic scope" value="Bacteria"/>
</dbReference>
<dbReference type="HOGENOM" id="CLU_087843_4_1_6"/>
<dbReference type="GO" id="GO:0005829">
    <property type="term" value="C:cytosol"/>
    <property type="evidence" value="ECO:0007669"/>
    <property type="project" value="TreeGrafter"/>
</dbReference>
<dbReference type="GO" id="GO:0003723">
    <property type="term" value="F:RNA binding"/>
    <property type="evidence" value="ECO:0007669"/>
    <property type="project" value="UniProtKB-UniRule"/>
</dbReference>
<dbReference type="GO" id="GO:0006353">
    <property type="term" value="P:DNA-templated transcription termination"/>
    <property type="evidence" value="ECO:0007669"/>
    <property type="project" value="UniProtKB-UniRule"/>
</dbReference>
<dbReference type="GO" id="GO:0031564">
    <property type="term" value="P:transcription antitermination"/>
    <property type="evidence" value="ECO:0007669"/>
    <property type="project" value="UniProtKB-KW"/>
</dbReference>
<dbReference type="CDD" id="cd00619">
    <property type="entry name" value="Terminator_NusB"/>
    <property type="match status" value="1"/>
</dbReference>
<dbReference type="FunFam" id="1.10.940.10:FF:000001">
    <property type="entry name" value="Transcription antitermination factor NusB"/>
    <property type="match status" value="1"/>
</dbReference>
<dbReference type="Gene3D" id="1.10.940.10">
    <property type="entry name" value="NusB-like"/>
    <property type="match status" value="1"/>
</dbReference>
<dbReference type="HAMAP" id="MF_00073">
    <property type="entry name" value="NusB"/>
    <property type="match status" value="1"/>
</dbReference>
<dbReference type="InterPro" id="IPR035926">
    <property type="entry name" value="NusB-like_sf"/>
</dbReference>
<dbReference type="InterPro" id="IPR011605">
    <property type="entry name" value="NusB_fam"/>
</dbReference>
<dbReference type="InterPro" id="IPR006027">
    <property type="entry name" value="NusB_RsmB_TIM44"/>
</dbReference>
<dbReference type="NCBIfam" id="TIGR01951">
    <property type="entry name" value="nusB"/>
    <property type="match status" value="1"/>
</dbReference>
<dbReference type="PANTHER" id="PTHR11078:SF3">
    <property type="entry name" value="ANTITERMINATION NUSB DOMAIN-CONTAINING PROTEIN"/>
    <property type="match status" value="1"/>
</dbReference>
<dbReference type="PANTHER" id="PTHR11078">
    <property type="entry name" value="N UTILIZATION SUBSTANCE PROTEIN B-RELATED"/>
    <property type="match status" value="1"/>
</dbReference>
<dbReference type="Pfam" id="PF01029">
    <property type="entry name" value="NusB"/>
    <property type="match status" value="1"/>
</dbReference>
<dbReference type="SUPFAM" id="SSF48013">
    <property type="entry name" value="NusB-like"/>
    <property type="match status" value="1"/>
</dbReference>
<keyword id="KW-0694">RNA-binding</keyword>
<keyword id="KW-0804">Transcription</keyword>
<keyword id="KW-0889">Transcription antitermination</keyword>
<keyword id="KW-0805">Transcription regulation</keyword>
<sequence length="134" mass="15226">MKPSERRKARRLAVQAIYSWQLSGNNIADVEHEFLTEQSLDGVDVAYFRELFSGVATKKTQLDELIIPHLERPIDEVSPVEKAIVRLATYELTFRKDVPYKVAINEAIELAKAFGADESHKFVNGLLDKLVARK</sequence>
<organism>
    <name type="scientific">Shewanella putrefaciens (strain CN-32 / ATCC BAA-453)</name>
    <dbReference type="NCBI Taxonomy" id="319224"/>
    <lineage>
        <taxon>Bacteria</taxon>
        <taxon>Pseudomonadati</taxon>
        <taxon>Pseudomonadota</taxon>
        <taxon>Gammaproteobacteria</taxon>
        <taxon>Alteromonadales</taxon>
        <taxon>Shewanellaceae</taxon>
        <taxon>Shewanella</taxon>
    </lineage>
</organism>
<accession>A4Y960</accession>
<proteinExistence type="inferred from homology"/>
<evidence type="ECO:0000255" key="1">
    <source>
        <dbReference type="HAMAP-Rule" id="MF_00073"/>
    </source>
</evidence>
<reference key="1">
    <citation type="submission" date="2007-04" db="EMBL/GenBank/DDBJ databases">
        <title>Complete sequence of Shewanella putrefaciens CN-32.</title>
        <authorList>
            <consortium name="US DOE Joint Genome Institute"/>
            <person name="Copeland A."/>
            <person name="Lucas S."/>
            <person name="Lapidus A."/>
            <person name="Barry K."/>
            <person name="Detter J.C."/>
            <person name="Glavina del Rio T."/>
            <person name="Hammon N."/>
            <person name="Israni S."/>
            <person name="Dalin E."/>
            <person name="Tice H."/>
            <person name="Pitluck S."/>
            <person name="Chain P."/>
            <person name="Malfatti S."/>
            <person name="Shin M."/>
            <person name="Vergez L."/>
            <person name="Schmutz J."/>
            <person name="Larimer F."/>
            <person name="Land M."/>
            <person name="Hauser L."/>
            <person name="Kyrpides N."/>
            <person name="Mikhailova N."/>
            <person name="Romine M.F."/>
            <person name="Fredrickson J."/>
            <person name="Tiedje J."/>
            <person name="Richardson P."/>
        </authorList>
    </citation>
    <scope>NUCLEOTIDE SEQUENCE [LARGE SCALE GENOMIC DNA]</scope>
    <source>
        <strain>CN-32 / ATCC BAA-453</strain>
    </source>
</reference>